<name>FNDC5_DANRE</name>
<reference key="1">
    <citation type="journal article" date="2013" name="Nature">
        <title>The zebrafish reference genome sequence and its relationship to the human genome.</title>
        <authorList>
            <person name="Howe K."/>
            <person name="Clark M.D."/>
            <person name="Torroja C.F."/>
            <person name="Torrance J."/>
            <person name="Berthelot C."/>
            <person name="Muffato M."/>
            <person name="Collins J.E."/>
            <person name="Humphray S."/>
            <person name="McLaren K."/>
            <person name="Matthews L."/>
            <person name="McLaren S."/>
            <person name="Sealy I."/>
            <person name="Caccamo M."/>
            <person name="Churcher C."/>
            <person name="Scott C."/>
            <person name="Barrett J.C."/>
            <person name="Koch R."/>
            <person name="Rauch G.J."/>
            <person name="White S."/>
            <person name="Chow W."/>
            <person name="Kilian B."/>
            <person name="Quintais L.T."/>
            <person name="Guerra-Assuncao J.A."/>
            <person name="Zhou Y."/>
            <person name="Gu Y."/>
            <person name="Yen J."/>
            <person name="Vogel J.H."/>
            <person name="Eyre T."/>
            <person name="Redmond S."/>
            <person name="Banerjee R."/>
            <person name="Chi J."/>
            <person name="Fu B."/>
            <person name="Langley E."/>
            <person name="Maguire S.F."/>
            <person name="Laird G.K."/>
            <person name="Lloyd D."/>
            <person name="Kenyon E."/>
            <person name="Donaldson S."/>
            <person name="Sehra H."/>
            <person name="Almeida-King J."/>
            <person name="Loveland J."/>
            <person name="Trevanion S."/>
            <person name="Jones M."/>
            <person name="Quail M."/>
            <person name="Willey D."/>
            <person name="Hunt A."/>
            <person name="Burton J."/>
            <person name="Sims S."/>
            <person name="McLay K."/>
            <person name="Plumb B."/>
            <person name="Davis J."/>
            <person name="Clee C."/>
            <person name="Oliver K."/>
            <person name="Clark R."/>
            <person name="Riddle C."/>
            <person name="Elliot D."/>
            <person name="Threadgold G."/>
            <person name="Harden G."/>
            <person name="Ware D."/>
            <person name="Begum S."/>
            <person name="Mortimore B."/>
            <person name="Kerry G."/>
            <person name="Heath P."/>
            <person name="Phillimore B."/>
            <person name="Tracey A."/>
            <person name="Corby N."/>
            <person name="Dunn M."/>
            <person name="Johnson C."/>
            <person name="Wood J."/>
            <person name="Clark S."/>
            <person name="Pelan S."/>
            <person name="Griffiths G."/>
            <person name="Smith M."/>
            <person name="Glithero R."/>
            <person name="Howden P."/>
            <person name="Barker N."/>
            <person name="Lloyd C."/>
            <person name="Stevens C."/>
            <person name="Harley J."/>
            <person name="Holt K."/>
            <person name="Panagiotidis G."/>
            <person name="Lovell J."/>
            <person name="Beasley H."/>
            <person name="Henderson C."/>
            <person name="Gordon D."/>
            <person name="Auger K."/>
            <person name="Wright D."/>
            <person name="Collins J."/>
            <person name="Raisen C."/>
            <person name="Dyer L."/>
            <person name="Leung K."/>
            <person name="Robertson L."/>
            <person name="Ambridge K."/>
            <person name="Leongamornlert D."/>
            <person name="McGuire S."/>
            <person name="Gilderthorp R."/>
            <person name="Griffiths C."/>
            <person name="Manthravadi D."/>
            <person name="Nichol S."/>
            <person name="Barker G."/>
            <person name="Whitehead S."/>
            <person name="Kay M."/>
            <person name="Brown J."/>
            <person name="Murnane C."/>
            <person name="Gray E."/>
            <person name="Humphries M."/>
            <person name="Sycamore N."/>
            <person name="Barker D."/>
            <person name="Saunders D."/>
            <person name="Wallis J."/>
            <person name="Babbage A."/>
            <person name="Hammond S."/>
            <person name="Mashreghi-Mohammadi M."/>
            <person name="Barr L."/>
            <person name="Martin S."/>
            <person name="Wray P."/>
            <person name="Ellington A."/>
            <person name="Matthews N."/>
            <person name="Ellwood M."/>
            <person name="Woodmansey R."/>
            <person name="Clark G."/>
            <person name="Cooper J."/>
            <person name="Tromans A."/>
            <person name="Grafham D."/>
            <person name="Skuce C."/>
            <person name="Pandian R."/>
            <person name="Andrews R."/>
            <person name="Harrison E."/>
            <person name="Kimberley A."/>
            <person name="Garnett J."/>
            <person name="Fosker N."/>
            <person name="Hall R."/>
            <person name="Garner P."/>
            <person name="Kelly D."/>
            <person name="Bird C."/>
            <person name="Palmer S."/>
            <person name="Gehring I."/>
            <person name="Berger A."/>
            <person name="Dooley C.M."/>
            <person name="Ersan-Urun Z."/>
            <person name="Eser C."/>
            <person name="Geiger H."/>
            <person name="Geisler M."/>
            <person name="Karotki L."/>
            <person name="Kirn A."/>
            <person name="Konantz J."/>
            <person name="Konantz M."/>
            <person name="Oberlander M."/>
            <person name="Rudolph-Geiger S."/>
            <person name="Teucke M."/>
            <person name="Lanz C."/>
            <person name="Raddatz G."/>
            <person name="Osoegawa K."/>
            <person name="Zhu B."/>
            <person name="Rapp A."/>
            <person name="Widaa S."/>
            <person name="Langford C."/>
            <person name="Yang F."/>
            <person name="Schuster S.C."/>
            <person name="Carter N.P."/>
            <person name="Harrow J."/>
            <person name="Ning Z."/>
            <person name="Herrero J."/>
            <person name="Searle S.M."/>
            <person name="Enright A."/>
            <person name="Geisler R."/>
            <person name="Plasterk R.H."/>
            <person name="Lee C."/>
            <person name="Westerfield M."/>
            <person name="de Jong P.J."/>
            <person name="Zon L.I."/>
            <person name="Postlethwait J.H."/>
            <person name="Nusslein-Volhard C."/>
            <person name="Hubbard T.J."/>
            <person name="Roest Crollius H."/>
            <person name="Rogers J."/>
            <person name="Stemple D.L."/>
        </authorList>
    </citation>
    <scope>NUCLEOTIDE SEQUENCE [LARGE SCALE GENOMIC DNA]</scope>
    <source>
        <strain>Tuebingen</strain>
    </source>
</reference>
<sequence length="207" mass="22756">MWGIKGSFAVLLLLFLAYIFASSVNADSLSAPLNVTIKALEGNSAIVTWDILEGDPVIGFAITQQKKDVRMLRFIQEVNTTTRSCALWDLEEDTEYIVHVQSISMSGTSPPSEPVLFRTPKESEKLASKSPDEVTMEEVGQAAQLRAGELIIIVVVLVMWAGVIALFCRQYDIIKDNEPNNNKDKAKNSSECSTPEHPTGGLLRSKV</sequence>
<evidence type="ECO:0000250" key="1">
    <source>
        <dbReference type="UniProtKB" id="Q8K4Z2"/>
    </source>
</evidence>
<evidence type="ECO:0000250" key="2">
    <source>
        <dbReference type="UniProtKB" id="Q8NAU1"/>
    </source>
</evidence>
<evidence type="ECO:0000255" key="3"/>
<evidence type="ECO:0000255" key="4">
    <source>
        <dbReference type="PROSITE-ProRule" id="PRU00316"/>
    </source>
</evidence>
<evidence type="ECO:0000256" key="5">
    <source>
        <dbReference type="SAM" id="MobiDB-lite"/>
    </source>
</evidence>
<feature type="signal peptide" evidence="3">
    <location>
        <begin position="1"/>
        <end position="26"/>
    </location>
</feature>
<feature type="chain" id="PRO_0000328974" description="Fibronectin type III domain-containing protein 5b">
    <location>
        <begin position="27"/>
        <end position="207"/>
    </location>
</feature>
<feature type="chain" id="PRO_0000415856" description="Irisin">
    <location>
        <begin position="27"/>
        <end position="138"/>
    </location>
</feature>
<feature type="topological domain" description="Extracellular" evidence="3">
    <location>
        <begin position="27"/>
        <end position="146"/>
    </location>
</feature>
<feature type="transmembrane region" description="Helical" evidence="3">
    <location>
        <begin position="147"/>
        <end position="167"/>
    </location>
</feature>
<feature type="topological domain" description="Cytoplasmic" evidence="3">
    <location>
        <begin position="168"/>
        <end position="207"/>
    </location>
</feature>
<feature type="domain" description="Fibronectin type-III" evidence="4">
    <location>
        <begin position="31"/>
        <end position="122"/>
    </location>
</feature>
<feature type="region of interest" description="Disordered" evidence="5">
    <location>
        <begin position="178"/>
        <end position="207"/>
    </location>
</feature>
<feature type="short sequence motif" description="Microbody targeting signal" evidence="3">
    <location>
        <begin position="205"/>
        <end position="207"/>
    </location>
</feature>
<feature type="compositionally biased region" description="Basic and acidic residues" evidence="5">
    <location>
        <begin position="178"/>
        <end position="188"/>
    </location>
</feature>
<feature type="site" description="Required for dimerization" evidence="2">
    <location>
        <position position="73"/>
    </location>
</feature>
<feature type="glycosylation site" description="N-linked (GlcNAc...) asparagine" evidence="3">
    <location>
        <position position="34"/>
    </location>
</feature>
<feature type="glycosylation site" description="N-linked (GlcNAc...) asparagine" evidence="3">
    <location>
        <position position="79"/>
    </location>
</feature>
<protein>
    <recommendedName>
        <fullName>Fibronectin type III domain-containing protein 5b</fullName>
    </recommendedName>
    <component>
        <recommendedName>
            <fullName>Irisin</fullName>
        </recommendedName>
    </component>
</protein>
<keyword id="KW-1003">Cell membrane</keyword>
<keyword id="KW-0325">Glycoprotein</keyword>
<keyword id="KW-0372">Hormone</keyword>
<keyword id="KW-0472">Membrane</keyword>
<keyword id="KW-0576">Peroxisome</keyword>
<keyword id="KW-1185">Reference proteome</keyword>
<keyword id="KW-0964">Secreted</keyword>
<keyword id="KW-0732">Signal</keyword>
<keyword id="KW-0812">Transmembrane</keyword>
<keyword id="KW-1133">Transmembrane helix</keyword>
<proteinExistence type="inferred from homology"/>
<organism>
    <name type="scientific">Danio rerio</name>
    <name type="common">Zebrafish</name>
    <name type="synonym">Brachydanio rerio</name>
    <dbReference type="NCBI Taxonomy" id="7955"/>
    <lineage>
        <taxon>Eukaryota</taxon>
        <taxon>Metazoa</taxon>
        <taxon>Chordata</taxon>
        <taxon>Craniata</taxon>
        <taxon>Vertebrata</taxon>
        <taxon>Euteleostomi</taxon>
        <taxon>Actinopterygii</taxon>
        <taxon>Neopterygii</taxon>
        <taxon>Teleostei</taxon>
        <taxon>Ostariophysi</taxon>
        <taxon>Cypriniformes</taxon>
        <taxon>Danionidae</taxon>
        <taxon>Danioninae</taxon>
        <taxon>Danio</taxon>
    </lineage>
</organism>
<gene>
    <name type="primary">fndc5b</name>
    <name type="ORF">si:dkey-264p5.1</name>
</gene>
<comment type="function">
    <molecule>Irisin</molecule>
    <text>May mediate beneficial effects of muscular exercise.</text>
</comment>
<comment type="subunit">
    <molecule>Irisin</molecule>
    <text evidence="2">Dimer; may exist in other oligomeric forms.</text>
</comment>
<comment type="subcellular location">
    <subcellularLocation>
        <location evidence="2">Cell membrane</location>
        <topology evidence="3">Single-pass type I membrane protein</topology>
    </subcellularLocation>
    <subcellularLocation>
        <location evidence="1">Peroxisome membrane</location>
        <topology evidence="3">Single-pass type I membrane protein</topology>
    </subcellularLocation>
</comment>
<comment type="subcellular location">
    <molecule>Irisin</molecule>
    <subcellularLocation>
        <location evidence="1">Secreted</location>
    </subcellularLocation>
</comment>
<comment type="domain">
    <text evidence="2">Fibronectin type-III domain is capable of forming a continuous intersubunit beta-sheet dimer; dimerization may thereby play a role in cell-cell adhesion or signaling.</text>
</comment>
<comment type="PTM">
    <text evidence="1">The extracellular domain is cleaved and released from the cell membrane.</text>
</comment>
<accession>Q1L867</accession>
<dbReference type="EMBL" id="CR954168">
    <property type="protein sequence ID" value="CAK10901.1"/>
    <property type="molecule type" value="Genomic_DNA"/>
</dbReference>
<dbReference type="RefSeq" id="NP_001037802.1">
    <property type="nucleotide sequence ID" value="NM_001044337.2"/>
</dbReference>
<dbReference type="RefSeq" id="XP_005159703.1">
    <property type="nucleotide sequence ID" value="XM_005159646.3"/>
</dbReference>
<dbReference type="SMR" id="Q1L867"/>
<dbReference type="FunCoup" id="Q1L867">
    <property type="interactions" value="377"/>
</dbReference>
<dbReference type="STRING" id="7955.ENSDARP00000052107"/>
<dbReference type="GlyCosmos" id="Q1L867">
    <property type="glycosylation" value="2 sites, No reported glycans"/>
</dbReference>
<dbReference type="PaxDb" id="7955-ENSDARP00000101528"/>
<dbReference type="Ensembl" id="ENSDART00000052108">
    <property type="protein sequence ID" value="ENSDARP00000052107"/>
    <property type="gene ID" value="ENSDARG00000035895"/>
</dbReference>
<dbReference type="GeneID" id="555635"/>
<dbReference type="KEGG" id="dre:555635"/>
<dbReference type="AGR" id="ZFIN:ZDB-GENE-060503-916"/>
<dbReference type="CTD" id="555635"/>
<dbReference type="ZFIN" id="ZDB-GENE-060503-916">
    <property type="gene designation" value="fndc5b"/>
</dbReference>
<dbReference type="eggNOG" id="ENOG502QQCU">
    <property type="taxonomic scope" value="Eukaryota"/>
</dbReference>
<dbReference type="HOGENOM" id="CLU_089166_1_0_1"/>
<dbReference type="InParanoid" id="Q1L867"/>
<dbReference type="OMA" id="TWEIFEG"/>
<dbReference type="OrthoDB" id="5843172at2759"/>
<dbReference type="PhylomeDB" id="Q1L867"/>
<dbReference type="TreeFam" id="TF325415"/>
<dbReference type="PRO" id="PR:Q1L867"/>
<dbReference type="Proteomes" id="UP000000437">
    <property type="component" value="Chromosome 19"/>
</dbReference>
<dbReference type="Bgee" id="ENSDARG00000035895">
    <property type="expression patterns" value="Expressed in brain and 10 other cell types or tissues"/>
</dbReference>
<dbReference type="ExpressionAtlas" id="Q1L867">
    <property type="expression patterns" value="baseline"/>
</dbReference>
<dbReference type="GO" id="GO:0005576">
    <property type="term" value="C:extracellular region"/>
    <property type="evidence" value="ECO:0000318"/>
    <property type="project" value="GO_Central"/>
</dbReference>
<dbReference type="GO" id="GO:0005778">
    <property type="term" value="C:peroxisomal membrane"/>
    <property type="evidence" value="ECO:0007669"/>
    <property type="project" value="UniProtKB-SubCell"/>
</dbReference>
<dbReference type="GO" id="GO:0005886">
    <property type="term" value="C:plasma membrane"/>
    <property type="evidence" value="ECO:0000318"/>
    <property type="project" value="GO_Central"/>
</dbReference>
<dbReference type="GO" id="GO:0005179">
    <property type="term" value="F:hormone activity"/>
    <property type="evidence" value="ECO:0007669"/>
    <property type="project" value="UniProtKB-KW"/>
</dbReference>
<dbReference type="CDD" id="cd00063">
    <property type="entry name" value="FN3"/>
    <property type="match status" value="1"/>
</dbReference>
<dbReference type="FunFam" id="2.60.40.10:FF:000117">
    <property type="entry name" value="Fibronectin type III domain containing 5"/>
    <property type="match status" value="1"/>
</dbReference>
<dbReference type="Gene3D" id="2.60.40.10">
    <property type="entry name" value="Immunoglobulins"/>
    <property type="match status" value="1"/>
</dbReference>
<dbReference type="InterPro" id="IPR003961">
    <property type="entry name" value="FN3_dom"/>
</dbReference>
<dbReference type="InterPro" id="IPR036116">
    <property type="entry name" value="FN3_sf"/>
</dbReference>
<dbReference type="InterPro" id="IPR032073">
    <property type="entry name" value="FNDC5_C"/>
</dbReference>
<dbReference type="InterPro" id="IPR052120">
    <property type="entry name" value="FNDC_type_III_4/5"/>
</dbReference>
<dbReference type="InterPro" id="IPR013783">
    <property type="entry name" value="Ig-like_fold"/>
</dbReference>
<dbReference type="PANTHER" id="PTHR14470">
    <property type="entry name" value="FIBRONECTIN TYPE III DOMAIN-CONTAINING PROTEIN"/>
    <property type="match status" value="1"/>
</dbReference>
<dbReference type="PANTHER" id="PTHR14470:SF1">
    <property type="entry name" value="FIBRONECTIN TYPE III DOMAIN-CONTAINING PROTEIN 5"/>
    <property type="match status" value="1"/>
</dbReference>
<dbReference type="Pfam" id="PF16066">
    <property type="entry name" value="DUF4808"/>
    <property type="match status" value="1"/>
</dbReference>
<dbReference type="Pfam" id="PF00041">
    <property type="entry name" value="fn3"/>
    <property type="match status" value="1"/>
</dbReference>
<dbReference type="SMART" id="SM00060">
    <property type="entry name" value="FN3"/>
    <property type="match status" value="1"/>
</dbReference>
<dbReference type="SUPFAM" id="SSF49265">
    <property type="entry name" value="Fibronectin type III"/>
    <property type="match status" value="1"/>
</dbReference>
<dbReference type="PROSITE" id="PS50853">
    <property type="entry name" value="FN3"/>
    <property type="match status" value="1"/>
</dbReference>